<accession>B3GZ06</accession>
<evidence type="ECO:0000255" key="1">
    <source>
        <dbReference type="HAMAP-Rule" id="MF_01241"/>
    </source>
</evidence>
<proteinExistence type="inferred from homology"/>
<feature type="chain" id="PRO_1000139751" description="Glucosamine-6-phosphate deaminase">
    <location>
        <begin position="1"/>
        <end position="267"/>
    </location>
</feature>
<feature type="active site" description="Proton acceptor; for enolization step" evidence="1">
    <location>
        <position position="72"/>
    </location>
</feature>
<feature type="active site" description="For ring-opening step" evidence="1">
    <location>
        <position position="141"/>
    </location>
</feature>
<feature type="active site" description="Proton acceptor; for ring-opening step" evidence="1">
    <location>
        <position position="143"/>
    </location>
</feature>
<feature type="active site" description="For ring-opening step" evidence="1">
    <location>
        <position position="148"/>
    </location>
</feature>
<feature type="site" description="Part of the allosteric site" evidence="1">
    <location>
        <position position="151"/>
    </location>
</feature>
<feature type="site" description="Part of the allosteric site" evidence="1">
    <location>
        <position position="158"/>
    </location>
</feature>
<feature type="site" description="Part of the allosteric site" evidence="1">
    <location>
        <position position="160"/>
    </location>
</feature>
<feature type="site" description="Part of the allosteric site" evidence="1">
    <location>
        <position position="161"/>
    </location>
</feature>
<feature type="site" description="Part of the allosteric site" evidence="1">
    <location>
        <position position="254"/>
    </location>
</feature>
<gene>
    <name evidence="1" type="primary">nagB</name>
    <name type="ordered locus">APP7_1840</name>
</gene>
<keyword id="KW-0021">Allosteric enzyme</keyword>
<keyword id="KW-0119">Carbohydrate metabolism</keyword>
<keyword id="KW-0378">Hydrolase</keyword>
<name>NAGB_ACTP7</name>
<sequence length="267" mass="30298">MRLIPLQTSEQVSRWAARHIVERINRFQPTADRPFVLGLPTGGTPLQTYKELIRLYQAGEVSFQHVVTFNMDEYVGLPKEHPQSYHTFMYRNFFDHIDIQPQNINILNGNTEDHDAECRRYEEKIKSYGKIHLFMGGVGVDGHIAFNEPASSLGSRTRIKTLTEDTLIANSRFFDNDITKVPKYALTVGVATLLDAEEVMLLITGYNKALALQACVEGSVNHMWTVSALQLHKRGIVVCDEPATQELKVKTVKYFTQLETQAIQSVL</sequence>
<comment type="function">
    <text evidence="1">Catalyzes the reversible isomerization-deamination of glucosamine 6-phosphate (GlcN6P) to form fructose 6-phosphate (Fru6P) and ammonium ion.</text>
</comment>
<comment type="catalytic activity">
    <reaction evidence="1">
        <text>alpha-D-glucosamine 6-phosphate + H2O = beta-D-fructose 6-phosphate + NH4(+)</text>
        <dbReference type="Rhea" id="RHEA:12172"/>
        <dbReference type="ChEBI" id="CHEBI:15377"/>
        <dbReference type="ChEBI" id="CHEBI:28938"/>
        <dbReference type="ChEBI" id="CHEBI:57634"/>
        <dbReference type="ChEBI" id="CHEBI:75989"/>
        <dbReference type="EC" id="3.5.99.6"/>
    </reaction>
</comment>
<comment type="activity regulation">
    <text evidence="1">Allosterically activated by N-acetylglucosamine 6-phosphate (GlcNAc6P).</text>
</comment>
<comment type="pathway">
    <text evidence="1">Amino-sugar metabolism; N-acetylneuraminate degradation; D-fructose 6-phosphate from N-acetylneuraminate: step 5/5.</text>
</comment>
<comment type="subunit">
    <text evidence="1">Homohexamer.</text>
</comment>
<comment type="similarity">
    <text evidence="1">Belongs to the glucosamine/galactosamine-6-phosphate isomerase family. NagB subfamily.</text>
</comment>
<organism>
    <name type="scientific">Actinobacillus pleuropneumoniae serotype 7 (strain AP76)</name>
    <dbReference type="NCBI Taxonomy" id="537457"/>
    <lineage>
        <taxon>Bacteria</taxon>
        <taxon>Pseudomonadati</taxon>
        <taxon>Pseudomonadota</taxon>
        <taxon>Gammaproteobacteria</taxon>
        <taxon>Pasteurellales</taxon>
        <taxon>Pasteurellaceae</taxon>
        <taxon>Actinobacillus</taxon>
    </lineage>
</organism>
<dbReference type="EC" id="3.5.99.6" evidence="1"/>
<dbReference type="EMBL" id="CP001091">
    <property type="protein sequence ID" value="ACE62492.1"/>
    <property type="molecule type" value="Genomic_DNA"/>
</dbReference>
<dbReference type="RefSeq" id="WP_005599267.1">
    <property type="nucleotide sequence ID" value="NC_010939.1"/>
</dbReference>
<dbReference type="SMR" id="B3GZ06"/>
<dbReference type="GeneID" id="48600047"/>
<dbReference type="KEGG" id="apa:APP7_1840"/>
<dbReference type="HOGENOM" id="CLU_049611_0_1_6"/>
<dbReference type="UniPathway" id="UPA00629">
    <property type="reaction ID" value="UER00684"/>
</dbReference>
<dbReference type="Proteomes" id="UP000001226">
    <property type="component" value="Chromosome"/>
</dbReference>
<dbReference type="GO" id="GO:0005737">
    <property type="term" value="C:cytoplasm"/>
    <property type="evidence" value="ECO:0007669"/>
    <property type="project" value="TreeGrafter"/>
</dbReference>
<dbReference type="GO" id="GO:0004342">
    <property type="term" value="F:glucosamine-6-phosphate deaminase activity"/>
    <property type="evidence" value="ECO:0007669"/>
    <property type="project" value="UniProtKB-UniRule"/>
</dbReference>
<dbReference type="GO" id="GO:0042802">
    <property type="term" value="F:identical protein binding"/>
    <property type="evidence" value="ECO:0007669"/>
    <property type="project" value="TreeGrafter"/>
</dbReference>
<dbReference type="GO" id="GO:0005975">
    <property type="term" value="P:carbohydrate metabolic process"/>
    <property type="evidence" value="ECO:0007669"/>
    <property type="project" value="InterPro"/>
</dbReference>
<dbReference type="GO" id="GO:0006043">
    <property type="term" value="P:glucosamine catabolic process"/>
    <property type="evidence" value="ECO:0007669"/>
    <property type="project" value="TreeGrafter"/>
</dbReference>
<dbReference type="GO" id="GO:0006046">
    <property type="term" value="P:N-acetylglucosamine catabolic process"/>
    <property type="evidence" value="ECO:0007669"/>
    <property type="project" value="TreeGrafter"/>
</dbReference>
<dbReference type="GO" id="GO:0019262">
    <property type="term" value="P:N-acetylneuraminate catabolic process"/>
    <property type="evidence" value="ECO:0007669"/>
    <property type="project" value="UniProtKB-UniRule"/>
</dbReference>
<dbReference type="CDD" id="cd01399">
    <property type="entry name" value="GlcN6P_deaminase"/>
    <property type="match status" value="1"/>
</dbReference>
<dbReference type="FunFam" id="3.40.50.1360:FF:000002">
    <property type="entry name" value="Glucosamine-6-phosphate deaminase"/>
    <property type="match status" value="1"/>
</dbReference>
<dbReference type="Gene3D" id="3.40.50.1360">
    <property type="match status" value="1"/>
</dbReference>
<dbReference type="HAMAP" id="MF_01241">
    <property type="entry name" value="GlcN6P_deamin"/>
    <property type="match status" value="1"/>
</dbReference>
<dbReference type="InterPro" id="IPR006148">
    <property type="entry name" value="Glc/Gal-6P_isomerase"/>
</dbReference>
<dbReference type="InterPro" id="IPR004547">
    <property type="entry name" value="Glucosamine6P_isomerase"/>
</dbReference>
<dbReference type="InterPro" id="IPR018321">
    <property type="entry name" value="Glucosamine6P_isomerase_CS"/>
</dbReference>
<dbReference type="InterPro" id="IPR037171">
    <property type="entry name" value="NagB/RpiA_transferase-like"/>
</dbReference>
<dbReference type="NCBIfam" id="TIGR00502">
    <property type="entry name" value="nagB"/>
    <property type="match status" value="1"/>
</dbReference>
<dbReference type="PANTHER" id="PTHR11280">
    <property type="entry name" value="GLUCOSAMINE-6-PHOSPHATE ISOMERASE"/>
    <property type="match status" value="1"/>
</dbReference>
<dbReference type="PANTHER" id="PTHR11280:SF5">
    <property type="entry name" value="GLUCOSAMINE-6-PHOSPHATE ISOMERASE"/>
    <property type="match status" value="1"/>
</dbReference>
<dbReference type="Pfam" id="PF01182">
    <property type="entry name" value="Glucosamine_iso"/>
    <property type="match status" value="1"/>
</dbReference>
<dbReference type="SUPFAM" id="SSF100950">
    <property type="entry name" value="NagB/RpiA/CoA transferase-like"/>
    <property type="match status" value="1"/>
</dbReference>
<dbReference type="PROSITE" id="PS01161">
    <property type="entry name" value="GLC_GALNAC_ISOMERASE"/>
    <property type="match status" value="1"/>
</dbReference>
<reference key="1">
    <citation type="submission" date="2008-06" db="EMBL/GenBank/DDBJ databases">
        <title>Genome and proteome analysis of A. pleuropneumoniae serotype 7.</title>
        <authorList>
            <person name="Linke B."/>
            <person name="Buettner F."/>
            <person name="Martinez-Arias R."/>
            <person name="Goesmann A."/>
            <person name="Baltes N."/>
            <person name="Tegetmeyer H."/>
            <person name="Singh M."/>
            <person name="Gerlach G.F."/>
        </authorList>
    </citation>
    <scope>NUCLEOTIDE SEQUENCE [LARGE SCALE GENOMIC DNA]</scope>
    <source>
        <strain>AP76</strain>
    </source>
</reference>
<protein>
    <recommendedName>
        <fullName evidence="1">Glucosamine-6-phosphate deaminase</fullName>
        <ecNumber evidence="1">3.5.99.6</ecNumber>
    </recommendedName>
    <alternativeName>
        <fullName evidence="1">GlcN6P deaminase</fullName>
        <shortName evidence="1">GNPDA</shortName>
    </alternativeName>
    <alternativeName>
        <fullName evidence="1">Glucosamine-6-phosphate isomerase</fullName>
    </alternativeName>
</protein>